<keyword id="KW-0687">Ribonucleoprotein</keyword>
<keyword id="KW-0689">Ribosomal protein</keyword>
<keyword id="KW-0694">RNA-binding</keyword>
<keyword id="KW-0699">rRNA-binding</keyword>
<evidence type="ECO:0000255" key="1">
    <source>
        <dbReference type="HAMAP-Rule" id="MF_01302"/>
    </source>
</evidence>
<evidence type="ECO:0000305" key="2"/>
<organism>
    <name type="scientific">Pseudomonas savastanoi pv. phaseolicola (strain 1448A / Race 6)</name>
    <name type="common">Pseudomonas syringae pv. phaseolicola (strain 1448A / Race 6)</name>
    <dbReference type="NCBI Taxonomy" id="264730"/>
    <lineage>
        <taxon>Bacteria</taxon>
        <taxon>Pseudomonadati</taxon>
        <taxon>Pseudomonadota</taxon>
        <taxon>Gammaproteobacteria</taxon>
        <taxon>Pseudomonadales</taxon>
        <taxon>Pseudomonadaceae</taxon>
        <taxon>Pseudomonas</taxon>
    </lineage>
</organism>
<protein>
    <recommendedName>
        <fullName evidence="1">Small ribosomal subunit protein uS8</fullName>
    </recommendedName>
    <alternativeName>
        <fullName evidence="2">30S ribosomal protein S8</fullName>
    </alternativeName>
</protein>
<name>RS8_PSE14</name>
<sequence length="130" mass="14022">MSMQDPLADMLTRIRNAQMAEKPVVSMPSSTLKVAVAKVLKDEGYIAGYQISSEVKSSLSIELKYFEGRPVIEEVKRVSRPGLRQYKSSDDLPKVRGGLGVSIVSTSKGVMTDRAARAAGVGGEVLCTVF</sequence>
<dbReference type="EMBL" id="CP000058">
    <property type="protein sequence ID" value="AAZ35901.1"/>
    <property type="molecule type" value="Genomic_DNA"/>
</dbReference>
<dbReference type="RefSeq" id="WP_002555475.1">
    <property type="nucleotide sequence ID" value="NC_005773.3"/>
</dbReference>
<dbReference type="SMR" id="Q48D50"/>
<dbReference type="GeneID" id="96221016"/>
<dbReference type="KEGG" id="psp:PSPPH_4578"/>
<dbReference type="eggNOG" id="COG0096">
    <property type="taxonomic scope" value="Bacteria"/>
</dbReference>
<dbReference type="HOGENOM" id="CLU_098428_0_0_6"/>
<dbReference type="Proteomes" id="UP000000551">
    <property type="component" value="Chromosome"/>
</dbReference>
<dbReference type="GO" id="GO:1990904">
    <property type="term" value="C:ribonucleoprotein complex"/>
    <property type="evidence" value="ECO:0007669"/>
    <property type="project" value="UniProtKB-KW"/>
</dbReference>
<dbReference type="GO" id="GO:0005840">
    <property type="term" value="C:ribosome"/>
    <property type="evidence" value="ECO:0007669"/>
    <property type="project" value="UniProtKB-KW"/>
</dbReference>
<dbReference type="GO" id="GO:0019843">
    <property type="term" value="F:rRNA binding"/>
    <property type="evidence" value="ECO:0007669"/>
    <property type="project" value="UniProtKB-UniRule"/>
</dbReference>
<dbReference type="GO" id="GO:0003735">
    <property type="term" value="F:structural constituent of ribosome"/>
    <property type="evidence" value="ECO:0007669"/>
    <property type="project" value="InterPro"/>
</dbReference>
<dbReference type="GO" id="GO:0006412">
    <property type="term" value="P:translation"/>
    <property type="evidence" value="ECO:0007669"/>
    <property type="project" value="UniProtKB-UniRule"/>
</dbReference>
<dbReference type="FunFam" id="3.30.1370.30:FF:000002">
    <property type="entry name" value="30S ribosomal protein S8"/>
    <property type="match status" value="1"/>
</dbReference>
<dbReference type="FunFam" id="3.30.1490.10:FF:000001">
    <property type="entry name" value="30S ribosomal protein S8"/>
    <property type="match status" value="1"/>
</dbReference>
<dbReference type="Gene3D" id="3.30.1370.30">
    <property type="match status" value="1"/>
</dbReference>
<dbReference type="Gene3D" id="3.30.1490.10">
    <property type="match status" value="1"/>
</dbReference>
<dbReference type="HAMAP" id="MF_01302_B">
    <property type="entry name" value="Ribosomal_uS8_B"/>
    <property type="match status" value="1"/>
</dbReference>
<dbReference type="InterPro" id="IPR000630">
    <property type="entry name" value="Ribosomal_uS8"/>
</dbReference>
<dbReference type="InterPro" id="IPR047863">
    <property type="entry name" value="Ribosomal_uS8_CS"/>
</dbReference>
<dbReference type="InterPro" id="IPR035987">
    <property type="entry name" value="Ribosomal_uS8_sf"/>
</dbReference>
<dbReference type="NCBIfam" id="NF001109">
    <property type="entry name" value="PRK00136.1"/>
    <property type="match status" value="1"/>
</dbReference>
<dbReference type="PANTHER" id="PTHR11758">
    <property type="entry name" value="40S RIBOSOMAL PROTEIN S15A"/>
    <property type="match status" value="1"/>
</dbReference>
<dbReference type="Pfam" id="PF00410">
    <property type="entry name" value="Ribosomal_S8"/>
    <property type="match status" value="1"/>
</dbReference>
<dbReference type="SUPFAM" id="SSF56047">
    <property type="entry name" value="Ribosomal protein S8"/>
    <property type="match status" value="1"/>
</dbReference>
<dbReference type="PROSITE" id="PS00053">
    <property type="entry name" value="RIBOSOMAL_S8"/>
    <property type="match status" value="1"/>
</dbReference>
<comment type="function">
    <text evidence="1">One of the primary rRNA binding proteins, it binds directly to 16S rRNA central domain where it helps coordinate assembly of the platform of the 30S subunit.</text>
</comment>
<comment type="subunit">
    <text evidence="1">Part of the 30S ribosomal subunit. Contacts proteins S5 and S12.</text>
</comment>
<comment type="similarity">
    <text evidence="1">Belongs to the universal ribosomal protein uS8 family.</text>
</comment>
<reference key="1">
    <citation type="journal article" date="2005" name="J. Bacteriol.">
        <title>Whole-genome sequence analysis of Pseudomonas syringae pv. phaseolicola 1448A reveals divergence among pathovars in genes involved in virulence and transposition.</title>
        <authorList>
            <person name="Joardar V."/>
            <person name="Lindeberg M."/>
            <person name="Jackson R.W."/>
            <person name="Selengut J."/>
            <person name="Dodson R."/>
            <person name="Brinkac L.M."/>
            <person name="Daugherty S.C."/>
            <person name="DeBoy R.T."/>
            <person name="Durkin A.S."/>
            <person name="Gwinn Giglio M."/>
            <person name="Madupu R."/>
            <person name="Nelson W.C."/>
            <person name="Rosovitz M.J."/>
            <person name="Sullivan S.A."/>
            <person name="Crabtree J."/>
            <person name="Creasy T."/>
            <person name="Davidsen T.M."/>
            <person name="Haft D.H."/>
            <person name="Zafar N."/>
            <person name="Zhou L."/>
            <person name="Halpin R."/>
            <person name="Holley T."/>
            <person name="Khouri H.M."/>
            <person name="Feldblyum T.V."/>
            <person name="White O."/>
            <person name="Fraser C.M."/>
            <person name="Chatterjee A.K."/>
            <person name="Cartinhour S."/>
            <person name="Schneider D."/>
            <person name="Mansfield J.W."/>
            <person name="Collmer A."/>
            <person name="Buell R."/>
        </authorList>
    </citation>
    <scope>NUCLEOTIDE SEQUENCE [LARGE SCALE GENOMIC DNA]</scope>
    <source>
        <strain>1448A / Race 6</strain>
    </source>
</reference>
<feature type="chain" id="PRO_0000225884" description="Small ribosomal subunit protein uS8">
    <location>
        <begin position="1"/>
        <end position="130"/>
    </location>
</feature>
<accession>Q48D50</accession>
<proteinExistence type="inferred from homology"/>
<gene>
    <name evidence="1" type="primary">rpsH</name>
    <name type="ordered locus">PSPPH_4578</name>
</gene>